<feature type="chain" id="PRO_0000130584" description="Protein translation factor SUI1 homolog">
    <location>
        <begin position="1"/>
        <end position="101"/>
    </location>
</feature>
<comment type="similarity">
    <text evidence="1">Belongs to the SUI1 family.</text>
</comment>
<dbReference type="EMBL" id="AE000666">
    <property type="protein sequence ID" value="AAB84511.1"/>
    <property type="molecule type" value="Genomic_DNA"/>
</dbReference>
<dbReference type="PIR" id="B69000">
    <property type="entry name" value="B69000"/>
</dbReference>
<dbReference type="SMR" id="O26118"/>
<dbReference type="FunCoup" id="O26118">
    <property type="interactions" value="84"/>
</dbReference>
<dbReference type="STRING" id="187420.MTH_10"/>
<dbReference type="PaxDb" id="187420-MTH_10"/>
<dbReference type="EnsemblBacteria" id="AAB84511">
    <property type="protein sequence ID" value="AAB84511"/>
    <property type="gene ID" value="MTH_10"/>
</dbReference>
<dbReference type="KEGG" id="mth:MTH_10"/>
<dbReference type="PATRIC" id="fig|187420.15.peg.10"/>
<dbReference type="HOGENOM" id="CLU_082805_6_1_2"/>
<dbReference type="InParanoid" id="O26118"/>
<dbReference type="Proteomes" id="UP000005223">
    <property type="component" value="Chromosome"/>
</dbReference>
<dbReference type="GO" id="GO:0003729">
    <property type="term" value="F:mRNA binding"/>
    <property type="evidence" value="ECO:0007669"/>
    <property type="project" value="TreeGrafter"/>
</dbReference>
<dbReference type="GO" id="GO:0003743">
    <property type="term" value="F:translation initiation factor activity"/>
    <property type="evidence" value="ECO:0007669"/>
    <property type="project" value="InterPro"/>
</dbReference>
<dbReference type="GO" id="GO:0001731">
    <property type="term" value="P:formation of translation preinitiation complex"/>
    <property type="evidence" value="ECO:0007669"/>
    <property type="project" value="TreeGrafter"/>
</dbReference>
<dbReference type="GO" id="GO:0006417">
    <property type="term" value="P:regulation of translation"/>
    <property type="evidence" value="ECO:0007669"/>
    <property type="project" value="UniProtKB-UniRule"/>
</dbReference>
<dbReference type="GO" id="GO:0002188">
    <property type="term" value="P:translation reinitiation"/>
    <property type="evidence" value="ECO:0007669"/>
    <property type="project" value="TreeGrafter"/>
</dbReference>
<dbReference type="CDD" id="cd11567">
    <property type="entry name" value="YciH_like"/>
    <property type="match status" value="1"/>
</dbReference>
<dbReference type="Gene3D" id="3.30.780.10">
    <property type="entry name" value="SUI1-like domain"/>
    <property type="match status" value="1"/>
</dbReference>
<dbReference type="HAMAP" id="MF_00604">
    <property type="entry name" value="SUI1"/>
    <property type="match status" value="1"/>
</dbReference>
<dbReference type="InterPro" id="IPR050318">
    <property type="entry name" value="DENR/SUI1_TIF"/>
</dbReference>
<dbReference type="InterPro" id="IPR001950">
    <property type="entry name" value="SUI1"/>
</dbReference>
<dbReference type="InterPro" id="IPR022851">
    <property type="entry name" value="SUI1_arc"/>
</dbReference>
<dbReference type="InterPro" id="IPR005872">
    <property type="entry name" value="SUI1_arc_bac"/>
</dbReference>
<dbReference type="InterPro" id="IPR036877">
    <property type="entry name" value="SUI1_dom_sf"/>
</dbReference>
<dbReference type="NCBIfam" id="NF002096">
    <property type="entry name" value="PRK00939.1"/>
    <property type="match status" value="1"/>
</dbReference>
<dbReference type="NCBIfam" id="TIGR01158">
    <property type="entry name" value="SUI1_rel"/>
    <property type="match status" value="1"/>
</dbReference>
<dbReference type="PANTHER" id="PTHR12789:SF0">
    <property type="entry name" value="DENSITY-REGULATED PROTEIN"/>
    <property type="match status" value="1"/>
</dbReference>
<dbReference type="PANTHER" id="PTHR12789">
    <property type="entry name" value="DENSITY-REGULATED PROTEIN HOMOLOG"/>
    <property type="match status" value="1"/>
</dbReference>
<dbReference type="Pfam" id="PF01253">
    <property type="entry name" value="SUI1"/>
    <property type="match status" value="1"/>
</dbReference>
<dbReference type="PIRSF" id="PIRSF037511">
    <property type="entry name" value="Transl_init_SUI1_pro"/>
    <property type="match status" value="1"/>
</dbReference>
<dbReference type="SUPFAM" id="SSF55159">
    <property type="entry name" value="eIF1-like"/>
    <property type="match status" value="1"/>
</dbReference>
<dbReference type="PROSITE" id="PS50296">
    <property type="entry name" value="SUI1"/>
    <property type="match status" value="1"/>
</dbReference>
<reference key="1">
    <citation type="journal article" date="1997" name="J. Bacteriol.">
        <title>Complete genome sequence of Methanobacterium thermoautotrophicum deltaH: functional analysis and comparative genomics.</title>
        <authorList>
            <person name="Smith D.R."/>
            <person name="Doucette-Stamm L.A."/>
            <person name="Deloughery C."/>
            <person name="Lee H.-M."/>
            <person name="Dubois J."/>
            <person name="Aldredge T."/>
            <person name="Bashirzadeh R."/>
            <person name="Blakely D."/>
            <person name="Cook R."/>
            <person name="Gilbert K."/>
            <person name="Harrison D."/>
            <person name="Hoang L."/>
            <person name="Keagle P."/>
            <person name="Lumm W."/>
            <person name="Pothier B."/>
            <person name="Qiu D."/>
            <person name="Spadafora R."/>
            <person name="Vicare R."/>
            <person name="Wang Y."/>
            <person name="Wierzbowski J."/>
            <person name="Gibson R."/>
            <person name="Jiwani N."/>
            <person name="Caruso A."/>
            <person name="Bush D."/>
            <person name="Safer H."/>
            <person name="Patwell D."/>
            <person name="Prabhakar S."/>
            <person name="McDougall S."/>
            <person name="Shimer G."/>
            <person name="Goyal A."/>
            <person name="Pietrovski S."/>
            <person name="Church G.M."/>
            <person name="Daniels C.J."/>
            <person name="Mao J.-I."/>
            <person name="Rice P."/>
            <person name="Noelling J."/>
            <person name="Reeve J.N."/>
        </authorList>
    </citation>
    <scope>NUCLEOTIDE SEQUENCE [LARGE SCALE GENOMIC DNA]</scope>
    <source>
        <strain>ATCC 29096 / DSM 1053 / JCM 10044 / NBRC 100330 / Delta H</strain>
    </source>
</reference>
<evidence type="ECO:0000255" key="1">
    <source>
        <dbReference type="HAMAP-Rule" id="MF_00604"/>
    </source>
</evidence>
<accession>O26118</accession>
<organism>
    <name type="scientific">Methanothermobacter thermautotrophicus (strain ATCC 29096 / DSM 1053 / JCM 10044 / NBRC 100330 / Delta H)</name>
    <name type="common">Methanobacterium thermoautotrophicum</name>
    <dbReference type="NCBI Taxonomy" id="187420"/>
    <lineage>
        <taxon>Archaea</taxon>
        <taxon>Methanobacteriati</taxon>
        <taxon>Methanobacteriota</taxon>
        <taxon>Methanomada group</taxon>
        <taxon>Methanobacteria</taxon>
        <taxon>Methanobacteriales</taxon>
        <taxon>Methanobacteriaceae</taxon>
        <taxon>Methanothermobacter</taxon>
    </lineage>
</organism>
<keyword id="KW-0648">Protein biosynthesis</keyword>
<keyword id="KW-1185">Reference proteome</keyword>
<keyword id="KW-0810">Translation regulation</keyword>
<proteinExistence type="inferred from homology"/>
<name>SUI1_METTH</name>
<protein>
    <recommendedName>
        <fullName evidence="1">Protein translation factor SUI1 homolog</fullName>
    </recommendedName>
</protein>
<gene>
    <name type="ordered locus">MTH_10</name>
</gene>
<sequence>MKICDVCGLPEELCVCEEIAREVQTLKVYTVRRRFGKVMTIIEGIDEHDIDIKELTKILKARCACGGTAKKGQIELQGDHKKKVKEVLADMGFSSDTIEIR</sequence>